<feature type="chain" id="PRO_1000190546" description="1-(5-phosphoribosyl)-5-[(5-phosphoribosylamino)methylideneamino] imidazole-4-carboxamide isomerase">
    <location>
        <begin position="1"/>
        <end position="248"/>
    </location>
</feature>
<feature type="active site" description="Proton acceptor" evidence="1">
    <location>
        <position position="8"/>
    </location>
</feature>
<feature type="active site" description="Proton donor" evidence="1">
    <location>
        <position position="129"/>
    </location>
</feature>
<accession>B5ZV92</accession>
<sequence>MILFPAIDLKGGQCVRLKLGDMQQATVYNTDPAAQAKSFEDQGFEWLHVVDLDGAFAGHSANGDAVEAILKATKNPVQLGGGIRTLDHIEAWLSRGLRRVILGTVAVRNPDLVIEACRKFPGHVAVGIDAKGGKVAVEGWAEASELGVIELARKFEGAGVAAIIYTDIDRDGILAGINWTSTLELAEAVSIPVIASGGLASLDDVRRMLEPDAQKLEGAISGRALYDGRIDPAEALALIKASRAKETA</sequence>
<comment type="catalytic activity">
    <reaction evidence="1">
        <text>1-(5-phospho-beta-D-ribosyl)-5-[(5-phospho-beta-D-ribosylamino)methylideneamino]imidazole-4-carboxamide = 5-[(5-phospho-1-deoxy-D-ribulos-1-ylimino)methylamino]-1-(5-phospho-beta-D-ribosyl)imidazole-4-carboxamide</text>
        <dbReference type="Rhea" id="RHEA:15469"/>
        <dbReference type="ChEBI" id="CHEBI:58435"/>
        <dbReference type="ChEBI" id="CHEBI:58525"/>
        <dbReference type="EC" id="5.3.1.16"/>
    </reaction>
</comment>
<comment type="pathway">
    <text evidence="1">Amino-acid biosynthesis; L-histidine biosynthesis; L-histidine from 5-phospho-alpha-D-ribose 1-diphosphate: step 4/9.</text>
</comment>
<comment type="subcellular location">
    <subcellularLocation>
        <location evidence="1">Cytoplasm</location>
    </subcellularLocation>
</comment>
<comment type="similarity">
    <text evidence="1">Belongs to the HisA/HisF family.</text>
</comment>
<organism>
    <name type="scientific">Rhizobium leguminosarum bv. trifolii (strain WSM2304)</name>
    <dbReference type="NCBI Taxonomy" id="395492"/>
    <lineage>
        <taxon>Bacteria</taxon>
        <taxon>Pseudomonadati</taxon>
        <taxon>Pseudomonadota</taxon>
        <taxon>Alphaproteobacteria</taxon>
        <taxon>Hyphomicrobiales</taxon>
        <taxon>Rhizobiaceae</taxon>
        <taxon>Rhizobium/Agrobacterium group</taxon>
        <taxon>Rhizobium</taxon>
    </lineage>
</organism>
<reference key="1">
    <citation type="journal article" date="2010" name="Stand. Genomic Sci.">
        <title>Complete genome sequence of Rhizobium leguminosarum bv trifolii strain WSM2304, an effective microsymbiont of the South American clover Trifolium polymorphum.</title>
        <authorList>
            <person name="Reeve W."/>
            <person name="O'Hara G."/>
            <person name="Chain P."/>
            <person name="Ardley J."/>
            <person name="Brau L."/>
            <person name="Nandesena K."/>
            <person name="Tiwari R."/>
            <person name="Malfatti S."/>
            <person name="Kiss H."/>
            <person name="Lapidus A."/>
            <person name="Copeland A."/>
            <person name="Nolan M."/>
            <person name="Land M."/>
            <person name="Ivanova N."/>
            <person name="Mavromatis K."/>
            <person name="Markowitz V."/>
            <person name="Kyrpides N."/>
            <person name="Melino V."/>
            <person name="Denton M."/>
            <person name="Yates R."/>
            <person name="Howieson J."/>
        </authorList>
    </citation>
    <scope>NUCLEOTIDE SEQUENCE [LARGE SCALE GENOMIC DNA]</scope>
    <source>
        <strain>WSM2304</strain>
    </source>
</reference>
<dbReference type="EC" id="5.3.1.16" evidence="1"/>
<dbReference type="EMBL" id="CP001191">
    <property type="protein sequence ID" value="ACI57238.1"/>
    <property type="molecule type" value="Genomic_DNA"/>
</dbReference>
<dbReference type="RefSeq" id="WP_012559417.1">
    <property type="nucleotide sequence ID" value="NC_011369.1"/>
</dbReference>
<dbReference type="SMR" id="B5ZV92"/>
<dbReference type="STRING" id="395492.Rleg2_3976"/>
<dbReference type="KEGG" id="rlt:Rleg2_3976"/>
<dbReference type="eggNOG" id="COG0106">
    <property type="taxonomic scope" value="Bacteria"/>
</dbReference>
<dbReference type="HOGENOM" id="CLU_048577_1_1_5"/>
<dbReference type="UniPathway" id="UPA00031">
    <property type="reaction ID" value="UER00009"/>
</dbReference>
<dbReference type="Proteomes" id="UP000008330">
    <property type="component" value="Chromosome"/>
</dbReference>
<dbReference type="GO" id="GO:0005737">
    <property type="term" value="C:cytoplasm"/>
    <property type="evidence" value="ECO:0007669"/>
    <property type="project" value="UniProtKB-SubCell"/>
</dbReference>
<dbReference type="GO" id="GO:0003949">
    <property type="term" value="F:1-(5-phosphoribosyl)-5-[(5-phosphoribosylamino)methylideneamino]imidazole-4-carboxamide isomerase activity"/>
    <property type="evidence" value="ECO:0007669"/>
    <property type="project" value="UniProtKB-UniRule"/>
</dbReference>
<dbReference type="GO" id="GO:0000105">
    <property type="term" value="P:L-histidine biosynthetic process"/>
    <property type="evidence" value="ECO:0007669"/>
    <property type="project" value="UniProtKB-UniRule"/>
</dbReference>
<dbReference type="GO" id="GO:0000162">
    <property type="term" value="P:L-tryptophan biosynthetic process"/>
    <property type="evidence" value="ECO:0007669"/>
    <property type="project" value="TreeGrafter"/>
</dbReference>
<dbReference type="CDD" id="cd04732">
    <property type="entry name" value="HisA"/>
    <property type="match status" value="1"/>
</dbReference>
<dbReference type="FunFam" id="3.20.20.70:FF:000009">
    <property type="entry name" value="1-(5-phosphoribosyl)-5-[(5-phosphoribosylamino)methylideneamino] imidazole-4-carboxamide isomerase"/>
    <property type="match status" value="1"/>
</dbReference>
<dbReference type="Gene3D" id="3.20.20.70">
    <property type="entry name" value="Aldolase class I"/>
    <property type="match status" value="1"/>
</dbReference>
<dbReference type="HAMAP" id="MF_01014">
    <property type="entry name" value="HisA"/>
    <property type="match status" value="1"/>
</dbReference>
<dbReference type="InterPro" id="IPR013785">
    <property type="entry name" value="Aldolase_TIM"/>
</dbReference>
<dbReference type="InterPro" id="IPR006062">
    <property type="entry name" value="His_biosynth"/>
</dbReference>
<dbReference type="InterPro" id="IPR006063">
    <property type="entry name" value="HisA_bact_arch"/>
</dbReference>
<dbReference type="InterPro" id="IPR044524">
    <property type="entry name" value="Isoase_HisA-like"/>
</dbReference>
<dbReference type="InterPro" id="IPR023016">
    <property type="entry name" value="Isoase_HisA-like_bact"/>
</dbReference>
<dbReference type="InterPro" id="IPR001763">
    <property type="entry name" value="Rhodanese-like_dom"/>
</dbReference>
<dbReference type="InterPro" id="IPR011060">
    <property type="entry name" value="RibuloseP-bd_barrel"/>
</dbReference>
<dbReference type="NCBIfam" id="TIGR00007">
    <property type="entry name" value="1-(5-phosphoribosyl)-5-[(5-phosphoribosylamino)methylideneamino]imidazole-4-carboxamide isomerase"/>
    <property type="match status" value="1"/>
</dbReference>
<dbReference type="PANTHER" id="PTHR43090">
    <property type="entry name" value="1-(5-PHOSPHORIBOSYL)-5-[(5-PHOSPHORIBOSYLAMINO)METHYLIDENEAMINO] IMIDAZOLE-4-CARBOXAMIDE ISOMERASE"/>
    <property type="match status" value="1"/>
</dbReference>
<dbReference type="PANTHER" id="PTHR43090:SF2">
    <property type="entry name" value="1-(5-PHOSPHORIBOSYL)-5-[(5-PHOSPHORIBOSYLAMINO)METHYLIDENEAMINO] IMIDAZOLE-4-CARBOXAMIDE ISOMERASE"/>
    <property type="match status" value="1"/>
</dbReference>
<dbReference type="Pfam" id="PF00977">
    <property type="entry name" value="His_biosynth"/>
    <property type="match status" value="1"/>
</dbReference>
<dbReference type="SUPFAM" id="SSF51366">
    <property type="entry name" value="Ribulose-phoshate binding barrel"/>
    <property type="match status" value="1"/>
</dbReference>
<protein>
    <recommendedName>
        <fullName evidence="1">1-(5-phosphoribosyl)-5-[(5-phosphoribosylamino)methylideneamino] imidazole-4-carboxamide isomerase</fullName>
        <ecNumber evidence="1">5.3.1.16</ecNumber>
    </recommendedName>
    <alternativeName>
        <fullName evidence="1">Phosphoribosylformimino-5-aminoimidazole carboxamide ribotide isomerase</fullName>
    </alternativeName>
</protein>
<evidence type="ECO:0000255" key="1">
    <source>
        <dbReference type="HAMAP-Rule" id="MF_01014"/>
    </source>
</evidence>
<keyword id="KW-0028">Amino-acid biosynthesis</keyword>
<keyword id="KW-0963">Cytoplasm</keyword>
<keyword id="KW-0368">Histidine biosynthesis</keyword>
<keyword id="KW-0413">Isomerase</keyword>
<keyword id="KW-1185">Reference proteome</keyword>
<name>HIS4_RHILW</name>
<gene>
    <name evidence="1" type="primary">hisA</name>
    <name type="ordered locus">Rleg2_3976</name>
</gene>
<proteinExistence type="inferred from homology"/>